<reference key="1">
    <citation type="journal article" date="2001" name="Science">
        <title>Mechanisms of evolution in Rickettsia conorii and R. prowazekii.</title>
        <authorList>
            <person name="Ogata H."/>
            <person name="Audic S."/>
            <person name="Renesto-Audiffren P."/>
            <person name="Fournier P.-E."/>
            <person name="Barbe V."/>
            <person name="Samson D."/>
            <person name="Roux V."/>
            <person name="Cossart P."/>
            <person name="Weissenbach J."/>
            <person name="Claverie J.-M."/>
            <person name="Raoult D."/>
        </authorList>
    </citation>
    <scope>NUCLEOTIDE SEQUENCE [LARGE SCALE GENOMIC DNA]</scope>
    <source>
        <strain>ATCC VR-613 / Malish 7</strain>
    </source>
</reference>
<feature type="chain" id="PRO_0000091720" description="3-hydroxyacyl-[acyl-carrier-protein] dehydratase FabZ">
    <location>
        <begin position="1"/>
        <end position="145"/>
    </location>
</feature>
<feature type="active site" evidence="1">
    <location>
        <position position="49"/>
    </location>
</feature>
<sequence length="145" mass="16320">MIIDITEIMDWIPHRYPFLLVDRVLKIDPNKSITGIKNVTVNEPQFTGHFPARPVMPGVLMVEAMAQLAAILVAKSLGSTKNKEVFLMTIENAKFRRIVQPGDTMHIHAVIDQQRANVWKFSSTVTVEGEIATESKFTAMIKDKT</sequence>
<name>FABZ_RICCN</name>
<gene>
    <name evidence="1" type="primary">fabZ</name>
    <name type="ordered locus">RC0009</name>
</gene>
<organism>
    <name type="scientific">Rickettsia conorii (strain ATCC VR-613 / Malish 7)</name>
    <dbReference type="NCBI Taxonomy" id="272944"/>
    <lineage>
        <taxon>Bacteria</taxon>
        <taxon>Pseudomonadati</taxon>
        <taxon>Pseudomonadota</taxon>
        <taxon>Alphaproteobacteria</taxon>
        <taxon>Rickettsiales</taxon>
        <taxon>Rickettsiaceae</taxon>
        <taxon>Rickettsieae</taxon>
        <taxon>Rickettsia</taxon>
        <taxon>spotted fever group</taxon>
    </lineage>
</organism>
<protein>
    <recommendedName>
        <fullName evidence="1">3-hydroxyacyl-[acyl-carrier-protein] dehydratase FabZ</fullName>
        <ecNumber evidence="1">4.2.1.59</ecNumber>
    </recommendedName>
    <alternativeName>
        <fullName evidence="1">(3R)-hydroxymyristoyl-[acyl-carrier-protein] dehydratase</fullName>
        <shortName evidence="1">(3R)-hydroxymyristoyl-ACP dehydrase</shortName>
    </alternativeName>
    <alternativeName>
        <fullName evidence="1">Beta-hydroxyacyl-ACP dehydratase</fullName>
    </alternativeName>
</protein>
<proteinExistence type="inferred from homology"/>
<evidence type="ECO:0000255" key="1">
    <source>
        <dbReference type="HAMAP-Rule" id="MF_00406"/>
    </source>
</evidence>
<dbReference type="EC" id="4.2.1.59" evidence="1"/>
<dbReference type="EMBL" id="AE006914">
    <property type="protein sequence ID" value="AAL02547.1"/>
    <property type="molecule type" value="Genomic_DNA"/>
</dbReference>
<dbReference type="PIR" id="A97701">
    <property type="entry name" value="A97701"/>
</dbReference>
<dbReference type="RefSeq" id="WP_010976697.1">
    <property type="nucleotide sequence ID" value="NC_003103.1"/>
</dbReference>
<dbReference type="SMR" id="Q92JQ8"/>
<dbReference type="GeneID" id="928657"/>
<dbReference type="KEGG" id="rco:RC0009"/>
<dbReference type="PATRIC" id="fig|272944.4.peg.8"/>
<dbReference type="HOGENOM" id="CLU_078912_1_2_5"/>
<dbReference type="Proteomes" id="UP000000816">
    <property type="component" value="Chromosome"/>
</dbReference>
<dbReference type="GO" id="GO:0005737">
    <property type="term" value="C:cytoplasm"/>
    <property type="evidence" value="ECO:0007669"/>
    <property type="project" value="UniProtKB-SubCell"/>
</dbReference>
<dbReference type="GO" id="GO:0016020">
    <property type="term" value="C:membrane"/>
    <property type="evidence" value="ECO:0007669"/>
    <property type="project" value="GOC"/>
</dbReference>
<dbReference type="GO" id="GO:0019171">
    <property type="term" value="F:(3R)-hydroxyacyl-[acyl-carrier-protein] dehydratase activity"/>
    <property type="evidence" value="ECO:0007669"/>
    <property type="project" value="UniProtKB-EC"/>
</dbReference>
<dbReference type="GO" id="GO:0006633">
    <property type="term" value="P:fatty acid biosynthetic process"/>
    <property type="evidence" value="ECO:0007669"/>
    <property type="project" value="UniProtKB-UniRule"/>
</dbReference>
<dbReference type="GO" id="GO:0009245">
    <property type="term" value="P:lipid A biosynthetic process"/>
    <property type="evidence" value="ECO:0007669"/>
    <property type="project" value="UniProtKB-UniRule"/>
</dbReference>
<dbReference type="CDD" id="cd01288">
    <property type="entry name" value="FabZ"/>
    <property type="match status" value="1"/>
</dbReference>
<dbReference type="FunFam" id="3.10.129.10:FF:000001">
    <property type="entry name" value="3-hydroxyacyl-[acyl-carrier-protein] dehydratase FabZ"/>
    <property type="match status" value="1"/>
</dbReference>
<dbReference type="Gene3D" id="3.10.129.10">
    <property type="entry name" value="Hotdog Thioesterase"/>
    <property type="match status" value="1"/>
</dbReference>
<dbReference type="HAMAP" id="MF_00406">
    <property type="entry name" value="FabZ"/>
    <property type="match status" value="1"/>
</dbReference>
<dbReference type="InterPro" id="IPR013114">
    <property type="entry name" value="FabA_FabZ"/>
</dbReference>
<dbReference type="InterPro" id="IPR010084">
    <property type="entry name" value="FabZ"/>
</dbReference>
<dbReference type="InterPro" id="IPR029069">
    <property type="entry name" value="HotDog_dom_sf"/>
</dbReference>
<dbReference type="NCBIfam" id="TIGR01750">
    <property type="entry name" value="fabZ"/>
    <property type="match status" value="1"/>
</dbReference>
<dbReference type="NCBIfam" id="NF000582">
    <property type="entry name" value="PRK00006.1"/>
    <property type="match status" value="1"/>
</dbReference>
<dbReference type="PANTHER" id="PTHR30272">
    <property type="entry name" value="3-HYDROXYACYL-[ACYL-CARRIER-PROTEIN] DEHYDRATASE"/>
    <property type="match status" value="1"/>
</dbReference>
<dbReference type="PANTHER" id="PTHR30272:SF1">
    <property type="entry name" value="3-HYDROXYACYL-[ACYL-CARRIER-PROTEIN] DEHYDRATASE"/>
    <property type="match status" value="1"/>
</dbReference>
<dbReference type="Pfam" id="PF07977">
    <property type="entry name" value="FabA"/>
    <property type="match status" value="1"/>
</dbReference>
<dbReference type="SUPFAM" id="SSF54637">
    <property type="entry name" value="Thioesterase/thiol ester dehydrase-isomerase"/>
    <property type="match status" value="1"/>
</dbReference>
<keyword id="KW-0963">Cytoplasm</keyword>
<keyword id="KW-0441">Lipid A biosynthesis</keyword>
<keyword id="KW-0444">Lipid biosynthesis</keyword>
<keyword id="KW-0443">Lipid metabolism</keyword>
<keyword id="KW-0456">Lyase</keyword>
<accession>Q92JQ8</accession>
<comment type="function">
    <text evidence="1">Involved in unsaturated fatty acids biosynthesis. Catalyzes the dehydration of short chain beta-hydroxyacyl-ACPs and long chain saturated and unsaturated beta-hydroxyacyl-ACPs.</text>
</comment>
<comment type="catalytic activity">
    <reaction evidence="1">
        <text>a (3R)-hydroxyacyl-[ACP] = a (2E)-enoyl-[ACP] + H2O</text>
        <dbReference type="Rhea" id="RHEA:13097"/>
        <dbReference type="Rhea" id="RHEA-COMP:9925"/>
        <dbReference type="Rhea" id="RHEA-COMP:9945"/>
        <dbReference type="ChEBI" id="CHEBI:15377"/>
        <dbReference type="ChEBI" id="CHEBI:78784"/>
        <dbReference type="ChEBI" id="CHEBI:78827"/>
        <dbReference type="EC" id="4.2.1.59"/>
    </reaction>
</comment>
<comment type="subcellular location">
    <subcellularLocation>
        <location evidence="1">Cytoplasm</location>
    </subcellularLocation>
</comment>
<comment type="similarity">
    <text evidence="1">Belongs to the thioester dehydratase family. FabZ subfamily.</text>
</comment>